<accession>B8IUU7</accession>
<organism>
    <name type="scientific">Methylobacterium nodulans (strain LMG 21967 / CNCM I-2342 / ORS 2060)</name>
    <dbReference type="NCBI Taxonomy" id="460265"/>
    <lineage>
        <taxon>Bacteria</taxon>
        <taxon>Pseudomonadati</taxon>
        <taxon>Pseudomonadota</taxon>
        <taxon>Alphaproteobacteria</taxon>
        <taxon>Hyphomicrobiales</taxon>
        <taxon>Methylobacteriaceae</taxon>
        <taxon>Methylobacterium</taxon>
    </lineage>
</organism>
<reference key="1">
    <citation type="submission" date="2009-01" db="EMBL/GenBank/DDBJ databases">
        <title>Complete sequence of chromosome of Methylobacterium nodulans ORS 2060.</title>
        <authorList>
            <consortium name="US DOE Joint Genome Institute"/>
            <person name="Lucas S."/>
            <person name="Copeland A."/>
            <person name="Lapidus A."/>
            <person name="Glavina del Rio T."/>
            <person name="Dalin E."/>
            <person name="Tice H."/>
            <person name="Bruce D."/>
            <person name="Goodwin L."/>
            <person name="Pitluck S."/>
            <person name="Sims D."/>
            <person name="Brettin T."/>
            <person name="Detter J.C."/>
            <person name="Han C."/>
            <person name="Larimer F."/>
            <person name="Land M."/>
            <person name="Hauser L."/>
            <person name="Kyrpides N."/>
            <person name="Ivanova N."/>
            <person name="Marx C.J."/>
            <person name="Richardson P."/>
        </authorList>
    </citation>
    <scope>NUCLEOTIDE SEQUENCE [LARGE SCALE GENOMIC DNA]</scope>
    <source>
        <strain>LMG 21967 / CNCM I-2342 / ORS 2060</strain>
    </source>
</reference>
<name>NUOB_METNO</name>
<feature type="chain" id="PRO_0000376268" description="NADH-quinone oxidoreductase subunit B">
    <location>
        <begin position="1"/>
        <end position="197"/>
    </location>
</feature>
<feature type="binding site" evidence="1">
    <location>
        <position position="76"/>
    </location>
    <ligand>
        <name>[4Fe-4S] cluster</name>
        <dbReference type="ChEBI" id="CHEBI:49883"/>
    </ligand>
</feature>
<feature type="binding site" evidence="1">
    <location>
        <position position="77"/>
    </location>
    <ligand>
        <name>[4Fe-4S] cluster</name>
        <dbReference type="ChEBI" id="CHEBI:49883"/>
    </ligand>
</feature>
<feature type="binding site" evidence="1">
    <location>
        <position position="141"/>
    </location>
    <ligand>
        <name>[4Fe-4S] cluster</name>
        <dbReference type="ChEBI" id="CHEBI:49883"/>
    </ligand>
</feature>
<feature type="binding site" evidence="1">
    <location>
        <position position="171"/>
    </location>
    <ligand>
        <name>[4Fe-4S] cluster</name>
        <dbReference type="ChEBI" id="CHEBI:49883"/>
    </ligand>
</feature>
<keyword id="KW-0004">4Fe-4S</keyword>
<keyword id="KW-0997">Cell inner membrane</keyword>
<keyword id="KW-1003">Cell membrane</keyword>
<keyword id="KW-0408">Iron</keyword>
<keyword id="KW-0411">Iron-sulfur</keyword>
<keyword id="KW-0472">Membrane</keyword>
<keyword id="KW-0479">Metal-binding</keyword>
<keyword id="KW-0520">NAD</keyword>
<keyword id="KW-0874">Quinone</keyword>
<keyword id="KW-1185">Reference proteome</keyword>
<keyword id="KW-1278">Translocase</keyword>
<keyword id="KW-0813">Transport</keyword>
<keyword id="KW-0830">Ubiquinone</keyword>
<comment type="function">
    <text evidence="1">NDH-1 shuttles electrons from NADH, via FMN and iron-sulfur (Fe-S) centers, to quinones in the respiratory chain. The immediate electron acceptor for the enzyme in this species is believed to be ubiquinone. Couples the redox reaction to proton translocation (for every two electrons transferred, four hydrogen ions are translocated across the cytoplasmic membrane), and thus conserves the redox energy in a proton gradient.</text>
</comment>
<comment type="catalytic activity">
    <reaction evidence="1">
        <text>a quinone + NADH + 5 H(+)(in) = a quinol + NAD(+) + 4 H(+)(out)</text>
        <dbReference type="Rhea" id="RHEA:57888"/>
        <dbReference type="ChEBI" id="CHEBI:15378"/>
        <dbReference type="ChEBI" id="CHEBI:24646"/>
        <dbReference type="ChEBI" id="CHEBI:57540"/>
        <dbReference type="ChEBI" id="CHEBI:57945"/>
        <dbReference type="ChEBI" id="CHEBI:132124"/>
    </reaction>
</comment>
<comment type="cofactor">
    <cofactor evidence="1">
        <name>[4Fe-4S] cluster</name>
        <dbReference type="ChEBI" id="CHEBI:49883"/>
    </cofactor>
    <text evidence="1">Binds 1 [4Fe-4S] cluster.</text>
</comment>
<comment type="subunit">
    <text evidence="1">NDH-1 is composed of 14 different subunits. Subunits NuoB, C, D, E, F, and G constitute the peripheral sector of the complex.</text>
</comment>
<comment type="subcellular location">
    <subcellularLocation>
        <location evidence="1">Cell inner membrane</location>
        <topology evidence="1">Peripheral membrane protein</topology>
        <orientation evidence="1">Cytoplasmic side</orientation>
    </subcellularLocation>
</comment>
<comment type="similarity">
    <text evidence="1">Belongs to the complex I 20 kDa subunit family.</text>
</comment>
<protein>
    <recommendedName>
        <fullName evidence="1">NADH-quinone oxidoreductase subunit B</fullName>
        <ecNumber evidence="1">7.1.1.-</ecNumber>
    </recommendedName>
    <alternativeName>
        <fullName evidence="1">NADH dehydrogenase I subunit B</fullName>
    </alternativeName>
    <alternativeName>
        <fullName evidence="1">NDH-1 subunit B</fullName>
    </alternativeName>
</protein>
<sequence>MPMALDTSFSRAPAIAPQPKGIIDPATGLPVGATDPTFLSINDELADRGFLLTTADDLITWARTGSLMWMTFGLACCAVEMMQMSMPRYDAERFGFAPRASPRQSDVMIVAGTLTNKMAPALRKVYDQMPEPRYVISMGSCANGGGYYHYSYSVVRGCDRVVPVDIYVPGCPPSAEALLYGVLLLQKKIRRTGTIER</sequence>
<proteinExistence type="inferred from homology"/>
<evidence type="ECO:0000255" key="1">
    <source>
        <dbReference type="HAMAP-Rule" id="MF_01356"/>
    </source>
</evidence>
<dbReference type="EC" id="7.1.1.-" evidence="1"/>
<dbReference type="EMBL" id="CP001349">
    <property type="protein sequence ID" value="ACL59005.1"/>
    <property type="molecule type" value="Genomic_DNA"/>
</dbReference>
<dbReference type="SMR" id="B8IUU7"/>
<dbReference type="STRING" id="460265.Mnod_4127"/>
<dbReference type="KEGG" id="mno:Mnod_4127"/>
<dbReference type="eggNOG" id="COG0377">
    <property type="taxonomic scope" value="Bacteria"/>
</dbReference>
<dbReference type="HOGENOM" id="CLU_055737_7_0_5"/>
<dbReference type="Proteomes" id="UP000008207">
    <property type="component" value="Chromosome"/>
</dbReference>
<dbReference type="GO" id="GO:0005886">
    <property type="term" value="C:plasma membrane"/>
    <property type="evidence" value="ECO:0007669"/>
    <property type="project" value="UniProtKB-SubCell"/>
</dbReference>
<dbReference type="GO" id="GO:0045271">
    <property type="term" value="C:respiratory chain complex I"/>
    <property type="evidence" value="ECO:0007669"/>
    <property type="project" value="TreeGrafter"/>
</dbReference>
<dbReference type="GO" id="GO:0051539">
    <property type="term" value="F:4 iron, 4 sulfur cluster binding"/>
    <property type="evidence" value="ECO:0007669"/>
    <property type="project" value="UniProtKB-KW"/>
</dbReference>
<dbReference type="GO" id="GO:0005506">
    <property type="term" value="F:iron ion binding"/>
    <property type="evidence" value="ECO:0007669"/>
    <property type="project" value="UniProtKB-UniRule"/>
</dbReference>
<dbReference type="GO" id="GO:0008137">
    <property type="term" value="F:NADH dehydrogenase (ubiquinone) activity"/>
    <property type="evidence" value="ECO:0007669"/>
    <property type="project" value="InterPro"/>
</dbReference>
<dbReference type="GO" id="GO:0050136">
    <property type="term" value="F:NADH:ubiquinone reductase (non-electrogenic) activity"/>
    <property type="evidence" value="ECO:0007669"/>
    <property type="project" value="UniProtKB-UniRule"/>
</dbReference>
<dbReference type="GO" id="GO:0048038">
    <property type="term" value="F:quinone binding"/>
    <property type="evidence" value="ECO:0007669"/>
    <property type="project" value="UniProtKB-KW"/>
</dbReference>
<dbReference type="GO" id="GO:0009060">
    <property type="term" value="P:aerobic respiration"/>
    <property type="evidence" value="ECO:0007669"/>
    <property type="project" value="TreeGrafter"/>
</dbReference>
<dbReference type="GO" id="GO:0015990">
    <property type="term" value="P:electron transport coupled proton transport"/>
    <property type="evidence" value="ECO:0007669"/>
    <property type="project" value="TreeGrafter"/>
</dbReference>
<dbReference type="FunFam" id="3.40.50.12280:FF:000001">
    <property type="entry name" value="NADH-quinone oxidoreductase subunit B 2"/>
    <property type="match status" value="1"/>
</dbReference>
<dbReference type="Gene3D" id="3.40.50.12280">
    <property type="match status" value="1"/>
</dbReference>
<dbReference type="HAMAP" id="MF_01356">
    <property type="entry name" value="NDH1_NuoB"/>
    <property type="match status" value="1"/>
</dbReference>
<dbReference type="InterPro" id="IPR006137">
    <property type="entry name" value="NADH_UbQ_OxRdtase-like_20kDa"/>
</dbReference>
<dbReference type="InterPro" id="IPR006138">
    <property type="entry name" value="NADH_UQ_OxRdtase_20Kd_su"/>
</dbReference>
<dbReference type="NCBIfam" id="TIGR01957">
    <property type="entry name" value="nuoB_fam"/>
    <property type="match status" value="1"/>
</dbReference>
<dbReference type="NCBIfam" id="NF005012">
    <property type="entry name" value="PRK06411.1"/>
    <property type="match status" value="1"/>
</dbReference>
<dbReference type="PANTHER" id="PTHR11995">
    <property type="entry name" value="NADH DEHYDROGENASE"/>
    <property type="match status" value="1"/>
</dbReference>
<dbReference type="PANTHER" id="PTHR11995:SF14">
    <property type="entry name" value="NADH DEHYDROGENASE [UBIQUINONE] IRON-SULFUR PROTEIN 7, MITOCHONDRIAL"/>
    <property type="match status" value="1"/>
</dbReference>
<dbReference type="Pfam" id="PF01058">
    <property type="entry name" value="Oxidored_q6"/>
    <property type="match status" value="1"/>
</dbReference>
<dbReference type="SUPFAM" id="SSF56770">
    <property type="entry name" value="HydA/Nqo6-like"/>
    <property type="match status" value="1"/>
</dbReference>
<dbReference type="PROSITE" id="PS01150">
    <property type="entry name" value="COMPLEX1_20K"/>
    <property type="match status" value="1"/>
</dbReference>
<gene>
    <name evidence="1" type="primary">nuoB</name>
    <name type="ordered locus">Mnod_4127</name>
</gene>